<protein>
    <recommendedName>
        <fullName evidence="1">3-deoxy-manno-octulosonate cytidylyltransferase</fullName>
        <ecNumber evidence="1">2.7.7.38</ecNumber>
    </recommendedName>
    <alternativeName>
        <fullName evidence="1">CMP-2-keto-3-deoxyoctulosonic acid synthase</fullName>
        <shortName evidence="1">CKS</shortName>
        <shortName evidence="1">CMP-KDO synthase</shortName>
    </alternativeName>
</protein>
<reference key="1">
    <citation type="submission" date="2008-02" db="EMBL/GenBank/DDBJ databases">
        <title>Complete sequence of chromosome of Methylobacterium sp. 4-46.</title>
        <authorList>
            <consortium name="US DOE Joint Genome Institute"/>
            <person name="Copeland A."/>
            <person name="Lucas S."/>
            <person name="Lapidus A."/>
            <person name="Glavina del Rio T."/>
            <person name="Dalin E."/>
            <person name="Tice H."/>
            <person name="Bruce D."/>
            <person name="Goodwin L."/>
            <person name="Pitluck S."/>
            <person name="Chertkov O."/>
            <person name="Brettin T."/>
            <person name="Detter J.C."/>
            <person name="Han C."/>
            <person name="Kuske C.R."/>
            <person name="Schmutz J."/>
            <person name="Larimer F."/>
            <person name="Land M."/>
            <person name="Hauser L."/>
            <person name="Kyrpides N."/>
            <person name="Ivanova N."/>
            <person name="Marx C.J."/>
            <person name="Richardson P."/>
        </authorList>
    </citation>
    <scope>NUCLEOTIDE SEQUENCE [LARGE SCALE GENOMIC DNA]</scope>
    <source>
        <strain>4-46</strain>
    </source>
</reference>
<sequence length="247" mass="26544">MSDPLILIPARLAATRLPDKPLAEICGEPMIVHVWRRAIESGLGPVVVCTDTPAIVAAVEAVGGLGVLTRPDHPSGSDRLAEALAIIDPEGRHDVVVNVQGDLPTIDPAVIAASVTPLADRAVDIATLCAVITRPEERTEPSVVKVVGSPVSPTRLRALYFTRATAPWGEGPLHHHIGLYAYRRRALERFVALGPSPLEQREKLEQLRALEAGMRIDATIVDDVPLGVDTPHDLDRARAVMAARRLN</sequence>
<organism>
    <name type="scientific">Methylobacterium sp. (strain 4-46)</name>
    <dbReference type="NCBI Taxonomy" id="426117"/>
    <lineage>
        <taxon>Bacteria</taxon>
        <taxon>Pseudomonadati</taxon>
        <taxon>Pseudomonadota</taxon>
        <taxon>Alphaproteobacteria</taxon>
        <taxon>Hyphomicrobiales</taxon>
        <taxon>Methylobacteriaceae</taxon>
        <taxon>Methylobacterium</taxon>
    </lineage>
</organism>
<evidence type="ECO:0000255" key="1">
    <source>
        <dbReference type="HAMAP-Rule" id="MF_00057"/>
    </source>
</evidence>
<evidence type="ECO:0000305" key="2"/>
<gene>
    <name evidence="1" type="primary">kdsB</name>
    <name type="ordered locus">M446_1619</name>
</gene>
<accession>B0UNK9</accession>
<proteinExistence type="inferred from homology"/>
<dbReference type="EC" id="2.7.7.38" evidence="1"/>
<dbReference type="EMBL" id="CP000943">
    <property type="protein sequence ID" value="ACA16117.1"/>
    <property type="status" value="ALT_INIT"/>
    <property type="molecule type" value="Genomic_DNA"/>
</dbReference>
<dbReference type="RefSeq" id="WP_043702154.1">
    <property type="nucleotide sequence ID" value="NC_010511.1"/>
</dbReference>
<dbReference type="SMR" id="B0UNK9"/>
<dbReference type="STRING" id="426117.M446_1619"/>
<dbReference type="KEGG" id="met:M446_1619"/>
<dbReference type="eggNOG" id="COG1212">
    <property type="taxonomic scope" value="Bacteria"/>
</dbReference>
<dbReference type="HOGENOM" id="CLU_065038_0_1_5"/>
<dbReference type="UniPathway" id="UPA00030"/>
<dbReference type="UniPathway" id="UPA00358">
    <property type="reaction ID" value="UER00476"/>
</dbReference>
<dbReference type="GO" id="GO:0005829">
    <property type="term" value="C:cytosol"/>
    <property type="evidence" value="ECO:0007669"/>
    <property type="project" value="TreeGrafter"/>
</dbReference>
<dbReference type="GO" id="GO:0008690">
    <property type="term" value="F:3-deoxy-manno-octulosonate cytidylyltransferase activity"/>
    <property type="evidence" value="ECO:0007669"/>
    <property type="project" value="UniProtKB-UniRule"/>
</dbReference>
<dbReference type="GO" id="GO:0033468">
    <property type="term" value="P:CMP-keto-3-deoxy-D-manno-octulosonic acid biosynthetic process"/>
    <property type="evidence" value="ECO:0007669"/>
    <property type="project" value="UniProtKB-UniRule"/>
</dbReference>
<dbReference type="GO" id="GO:0009103">
    <property type="term" value="P:lipopolysaccharide biosynthetic process"/>
    <property type="evidence" value="ECO:0007669"/>
    <property type="project" value="UniProtKB-UniRule"/>
</dbReference>
<dbReference type="CDD" id="cd02517">
    <property type="entry name" value="CMP-KDO-Synthetase"/>
    <property type="match status" value="1"/>
</dbReference>
<dbReference type="Gene3D" id="3.90.550.10">
    <property type="entry name" value="Spore Coat Polysaccharide Biosynthesis Protein SpsA, Chain A"/>
    <property type="match status" value="1"/>
</dbReference>
<dbReference type="HAMAP" id="MF_00057">
    <property type="entry name" value="KdsB"/>
    <property type="match status" value="1"/>
</dbReference>
<dbReference type="InterPro" id="IPR003329">
    <property type="entry name" value="Cytidylyl_trans"/>
</dbReference>
<dbReference type="InterPro" id="IPR004528">
    <property type="entry name" value="KdsB"/>
</dbReference>
<dbReference type="InterPro" id="IPR029044">
    <property type="entry name" value="Nucleotide-diphossugar_trans"/>
</dbReference>
<dbReference type="NCBIfam" id="TIGR00466">
    <property type="entry name" value="kdsB"/>
    <property type="match status" value="1"/>
</dbReference>
<dbReference type="NCBIfam" id="NF003948">
    <property type="entry name" value="PRK05450.1-1"/>
    <property type="match status" value="1"/>
</dbReference>
<dbReference type="NCBIfam" id="NF003952">
    <property type="entry name" value="PRK05450.1-5"/>
    <property type="match status" value="1"/>
</dbReference>
<dbReference type="PANTHER" id="PTHR42866">
    <property type="entry name" value="3-DEOXY-MANNO-OCTULOSONATE CYTIDYLYLTRANSFERASE"/>
    <property type="match status" value="1"/>
</dbReference>
<dbReference type="PANTHER" id="PTHR42866:SF2">
    <property type="entry name" value="3-DEOXY-MANNO-OCTULOSONATE CYTIDYLYLTRANSFERASE, MITOCHONDRIAL"/>
    <property type="match status" value="1"/>
</dbReference>
<dbReference type="Pfam" id="PF02348">
    <property type="entry name" value="CTP_transf_3"/>
    <property type="match status" value="1"/>
</dbReference>
<dbReference type="SUPFAM" id="SSF53448">
    <property type="entry name" value="Nucleotide-diphospho-sugar transferases"/>
    <property type="match status" value="1"/>
</dbReference>
<feature type="chain" id="PRO_0000370099" description="3-deoxy-manno-octulosonate cytidylyltransferase">
    <location>
        <begin position="1"/>
        <end position="247"/>
    </location>
</feature>
<comment type="function">
    <text evidence="1">Activates KDO (a required 8-carbon sugar) for incorporation into bacterial lipopolysaccharide in Gram-negative bacteria.</text>
</comment>
<comment type="catalytic activity">
    <reaction evidence="1">
        <text>3-deoxy-alpha-D-manno-oct-2-ulosonate + CTP = CMP-3-deoxy-beta-D-manno-octulosonate + diphosphate</text>
        <dbReference type="Rhea" id="RHEA:23448"/>
        <dbReference type="ChEBI" id="CHEBI:33019"/>
        <dbReference type="ChEBI" id="CHEBI:37563"/>
        <dbReference type="ChEBI" id="CHEBI:85986"/>
        <dbReference type="ChEBI" id="CHEBI:85987"/>
        <dbReference type="EC" id="2.7.7.38"/>
    </reaction>
</comment>
<comment type="pathway">
    <text evidence="1">Nucleotide-sugar biosynthesis; CMP-3-deoxy-D-manno-octulosonate biosynthesis; CMP-3-deoxy-D-manno-octulosonate from 3-deoxy-D-manno-octulosonate and CTP: step 1/1.</text>
</comment>
<comment type="pathway">
    <text evidence="1">Bacterial outer membrane biogenesis; lipopolysaccharide biosynthesis.</text>
</comment>
<comment type="subcellular location">
    <subcellularLocation>
        <location evidence="1">Cytoplasm</location>
    </subcellularLocation>
</comment>
<comment type="similarity">
    <text evidence="1">Belongs to the KdsB family.</text>
</comment>
<comment type="sequence caution" evidence="2">
    <conflict type="erroneous initiation">
        <sequence resource="EMBL-CDS" id="ACA16117"/>
    </conflict>
</comment>
<keyword id="KW-0963">Cytoplasm</keyword>
<keyword id="KW-0448">Lipopolysaccharide biosynthesis</keyword>
<keyword id="KW-0548">Nucleotidyltransferase</keyword>
<keyword id="KW-0808">Transferase</keyword>
<name>KDSB_METS4</name>